<comment type="function">
    <text evidence="1">The glycine cleavage system catalyzes the degradation of glycine. The P protein binds the alpha-amino group of glycine through its pyridoxal phosphate cofactor; CO(2) is released and the remaining methylamine moiety is then transferred to the lipoamide cofactor of the H protein.</text>
</comment>
<comment type="catalytic activity">
    <reaction evidence="1">
        <text>N(6)-[(R)-lipoyl]-L-lysyl-[glycine-cleavage complex H protein] + glycine + H(+) = N(6)-[(R)-S(8)-aminomethyldihydrolipoyl]-L-lysyl-[glycine-cleavage complex H protein] + CO2</text>
        <dbReference type="Rhea" id="RHEA:24304"/>
        <dbReference type="Rhea" id="RHEA-COMP:10494"/>
        <dbReference type="Rhea" id="RHEA-COMP:10495"/>
        <dbReference type="ChEBI" id="CHEBI:15378"/>
        <dbReference type="ChEBI" id="CHEBI:16526"/>
        <dbReference type="ChEBI" id="CHEBI:57305"/>
        <dbReference type="ChEBI" id="CHEBI:83099"/>
        <dbReference type="ChEBI" id="CHEBI:83143"/>
        <dbReference type="EC" id="1.4.4.2"/>
    </reaction>
</comment>
<comment type="cofactor">
    <cofactor evidence="1">
        <name>pyridoxal 5'-phosphate</name>
        <dbReference type="ChEBI" id="CHEBI:597326"/>
    </cofactor>
</comment>
<comment type="subunit">
    <text evidence="1">The glycine cleavage system is composed of four proteins: P, T, L and H.</text>
</comment>
<comment type="similarity">
    <text evidence="1">Belongs to the GcvP family.</text>
</comment>
<sequence>MTQNLSQLEHNDAFIQRHIGSSVEQQQQMLAAVGASSLSTLIQQIVPADIQLPGPPPVGEAATEHQALAELKGIASQNQCYKSYIGMGYSPVLTPPVILRNMLENPGWYTAYTPYQPEVSQGRLEALLNFQQLTQDLTGLDLASASLLDEATAAAESMALAKRASKLKDANRFFVADDVHPQTLDVVLTRAETFGFDVIVDRAEKVLELDGIFGVLLQQVGTTGELHDYSALLAELKKRKIITSVAADIMALVLLTAPGAQGADVVFGSAQRFGVPMGYGGPHAAFFACRDEFKRSMPGRIIGVSRDAAGNTALRMAMQTREQHIRREKANSNICTSQVLLANIASLYAVYHGPQGLQRIAGRIHRMTDILAAGLQHAGLTLRFKHWFDTLTVEVKDKAAVLARALSFGINLRTDIHGAVGITLNETTSREDIQTLFALFVGDNHGLDIDQLDAAVSQHSQSIQDSMLRRDPILTHPVFNRYHSETEMMRYMHRLERKDLALNQAMIPLGSCTMKLNAAAEMIPITWPEFAELHPFCPPEQAAGYQQMIGQLSQWLVQLTGYDAVCMQPNSGAQGEYAGLLAIRRYHESRNQANRHICLIPSSAHGTNPASAQMAGMSVVVVACDKQGNIDLHDLRQKAEHAGDELSCIMVTYPSTHGVYEETIREVCQIVHQFGGQVYLDGANMNAQVGITTPGYIGADVSHLNLHKTFCIPHGGGGPGMGPIGVKAHLAPFVPGHSVVQIDGMTTQQGAVSAAPFGSASILPISWMYIRMMGADGLKQASQVAILNANYIATRLKNAYPVLYTGHDGRVAHECILDIRPLKEATGISEMDIAKRLIDFGFHAPTMSFPVAGTLMVEPTESESKVELDRFIDAMLAIRAEIEKVAQGEWPLEDNPLVNAPHTQAELVGEWTHPYSRELAVFPVAGVLENKYWPTVKRLDDVYGDRNLFCSCVPISDYE</sequence>
<organism>
    <name type="scientific">Yersinia pestis bv. Antiqua (strain Angola)</name>
    <dbReference type="NCBI Taxonomy" id="349746"/>
    <lineage>
        <taxon>Bacteria</taxon>
        <taxon>Pseudomonadati</taxon>
        <taxon>Pseudomonadota</taxon>
        <taxon>Gammaproteobacteria</taxon>
        <taxon>Enterobacterales</taxon>
        <taxon>Yersiniaceae</taxon>
        <taxon>Yersinia</taxon>
    </lineage>
</organism>
<gene>
    <name evidence="1" type="primary">gcvP</name>
    <name type="ordered locus">YpAngola_A3832</name>
</gene>
<accession>A9R4K8</accession>
<evidence type="ECO:0000255" key="1">
    <source>
        <dbReference type="HAMAP-Rule" id="MF_00711"/>
    </source>
</evidence>
<name>GCSP_YERPG</name>
<protein>
    <recommendedName>
        <fullName evidence="1">Glycine dehydrogenase (decarboxylating)</fullName>
        <ecNumber evidence="1">1.4.4.2</ecNumber>
    </recommendedName>
    <alternativeName>
        <fullName evidence="1">Glycine cleavage system P-protein</fullName>
    </alternativeName>
    <alternativeName>
        <fullName evidence="1">Glycine decarboxylase</fullName>
    </alternativeName>
    <alternativeName>
        <fullName evidence="1">Glycine dehydrogenase (aminomethyl-transferring)</fullName>
    </alternativeName>
</protein>
<proteinExistence type="inferred from homology"/>
<reference key="1">
    <citation type="journal article" date="2010" name="J. Bacteriol.">
        <title>Genome sequence of the deep-rooted Yersinia pestis strain Angola reveals new insights into the evolution and pangenome of the plague bacterium.</title>
        <authorList>
            <person name="Eppinger M."/>
            <person name="Worsham P.L."/>
            <person name="Nikolich M.P."/>
            <person name="Riley D.R."/>
            <person name="Sebastian Y."/>
            <person name="Mou S."/>
            <person name="Achtman M."/>
            <person name="Lindler L.E."/>
            <person name="Ravel J."/>
        </authorList>
    </citation>
    <scope>NUCLEOTIDE SEQUENCE [LARGE SCALE GENOMIC DNA]</scope>
    <source>
        <strain>Angola</strain>
    </source>
</reference>
<feature type="chain" id="PRO_1000132463" description="Glycine dehydrogenase (decarboxylating)">
    <location>
        <begin position="1"/>
        <end position="959"/>
    </location>
</feature>
<feature type="modified residue" description="N6-(pyridoxal phosphate)lysine" evidence="1">
    <location>
        <position position="708"/>
    </location>
</feature>
<keyword id="KW-0560">Oxidoreductase</keyword>
<keyword id="KW-0663">Pyridoxal phosphate</keyword>
<dbReference type="EC" id="1.4.4.2" evidence="1"/>
<dbReference type="EMBL" id="CP000901">
    <property type="protein sequence ID" value="ABX86860.1"/>
    <property type="molecule type" value="Genomic_DNA"/>
</dbReference>
<dbReference type="RefSeq" id="WP_002209947.1">
    <property type="nucleotide sequence ID" value="NZ_CP009935.1"/>
</dbReference>
<dbReference type="SMR" id="A9R4K8"/>
<dbReference type="GeneID" id="57973735"/>
<dbReference type="KEGG" id="ypg:YpAngola_A3832"/>
<dbReference type="PATRIC" id="fig|349746.12.peg.548"/>
<dbReference type="GO" id="GO:0005829">
    <property type="term" value="C:cytosol"/>
    <property type="evidence" value="ECO:0007669"/>
    <property type="project" value="TreeGrafter"/>
</dbReference>
<dbReference type="GO" id="GO:0005960">
    <property type="term" value="C:glycine cleavage complex"/>
    <property type="evidence" value="ECO:0007669"/>
    <property type="project" value="TreeGrafter"/>
</dbReference>
<dbReference type="GO" id="GO:0016594">
    <property type="term" value="F:glycine binding"/>
    <property type="evidence" value="ECO:0007669"/>
    <property type="project" value="TreeGrafter"/>
</dbReference>
<dbReference type="GO" id="GO:0004375">
    <property type="term" value="F:glycine dehydrogenase (decarboxylating) activity"/>
    <property type="evidence" value="ECO:0007669"/>
    <property type="project" value="UniProtKB-EC"/>
</dbReference>
<dbReference type="GO" id="GO:0030170">
    <property type="term" value="F:pyridoxal phosphate binding"/>
    <property type="evidence" value="ECO:0007669"/>
    <property type="project" value="TreeGrafter"/>
</dbReference>
<dbReference type="GO" id="GO:0019464">
    <property type="term" value="P:glycine decarboxylation via glycine cleavage system"/>
    <property type="evidence" value="ECO:0007669"/>
    <property type="project" value="UniProtKB-UniRule"/>
</dbReference>
<dbReference type="CDD" id="cd00613">
    <property type="entry name" value="GDC-P"/>
    <property type="match status" value="2"/>
</dbReference>
<dbReference type="FunFam" id="3.40.640.10:FF:000005">
    <property type="entry name" value="Glycine dehydrogenase (decarboxylating), mitochondrial"/>
    <property type="match status" value="1"/>
</dbReference>
<dbReference type="FunFam" id="3.90.1150.10:FF:000007">
    <property type="entry name" value="Glycine dehydrogenase (decarboxylating), mitochondrial"/>
    <property type="match status" value="1"/>
</dbReference>
<dbReference type="FunFam" id="3.40.640.10:FF:000007">
    <property type="entry name" value="glycine dehydrogenase (Decarboxylating), mitochondrial"/>
    <property type="match status" value="1"/>
</dbReference>
<dbReference type="Gene3D" id="3.90.1150.10">
    <property type="entry name" value="Aspartate Aminotransferase, domain 1"/>
    <property type="match status" value="2"/>
</dbReference>
<dbReference type="Gene3D" id="3.40.640.10">
    <property type="entry name" value="Type I PLP-dependent aspartate aminotransferase-like (Major domain)"/>
    <property type="match status" value="2"/>
</dbReference>
<dbReference type="HAMAP" id="MF_00711">
    <property type="entry name" value="GcvP"/>
    <property type="match status" value="1"/>
</dbReference>
<dbReference type="InterPro" id="IPR003437">
    <property type="entry name" value="GcvP"/>
</dbReference>
<dbReference type="InterPro" id="IPR049316">
    <property type="entry name" value="GDC-P_C"/>
</dbReference>
<dbReference type="InterPro" id="IPR049315">
    <property type="entry name" value="GDC-P_N"/>
</dbReference>
<dbReference type="InterPro" id="IPR020581">
    <property type="entry name" value="GDC_P"/>
</dbReference>
<dbReference type="InterPro" id="IPR015424">
    <property type="entry name" value="PyrdxlP-dep_Trfase"/>
</dbReference>
<dbReference type="InterPro" id="IPR015421">
    <property type="entry name" value="PyrdxlP-dep_Trfase_major"/>
</dbReference>
<dbReference type="InterPro" id="IPR015422">
    <property type="entry name" value="PyrdxlP-dep_Trfase_small"/>
</dbReference>
<dbReference type="NCBIfam" id="TIGR00461">
    <property type="entry name" value="gcvP"/>
    <property type="match status" value="1"/>
</dbReference>
<dbReference type="NCBIfam" id="NF003346">
    <property type="entry name" value="PRK04366.1"/>
    <property type="match status" value="1"/>
</dbReference>
<dbReference type="PANTHER" id="PTHR11773:SF13">
    <property type="entry name" value="GLYCINE DEHYDROGENASE (DECARBOXYLATING)"/>
    <property type="match status" value="1"/>
</dbReference>
<dbReference type="PANTHER" id="PTHR11773">
    <property type="entry name" value="GLYCINE DEHYDROGENASE, DECARBOXYLATING"/>
    <property type="match status" value="1"/>
</dbReference>
<dbReference type="Pfam" id="PF21478">
    <property type="entry name" value="GcvP2_C"/>
    <property type="match status" value="1"/>
</dbReference>
<dbReference type="Pfam" id="PF02347">
    <property type="entry name" value="GDC-P"/>
    <property type="match status" value="2"/>
</dbReference>
<dbReference type="SUPFAM" id="SSF53383">
    <property type="entry name" value="PLP-dependent transferases"/>
    <property type="match status" value="2"/>
</dbReference>